<comment type="function">
    <text evidence="1">Catalyzes the isomerization of citrate to isocitrate via cis-aconitate, a step in the citric acid cycle.</text>
</comment>
<comment type="catalytic activity">
    <reaction>
        <text>citrate = D-threo-isocitrate</text>
        <dbReference type="Rhea" id="RHEA:10336"/>
        <dbReference type="ChEBI" id="CHEBI:15562"/>
        <dbReference type="ChEBI" id="CHEBI:16947"/>
        <dbReference type="EC" id="4.2.1.3"/>
    </reaction>
</comment>
<comment type="cofactor">
    <cofactor evidence="1">
        <name>[4Fe-4S] cluster</name>
        <dbReference type="ChEBI" id="CHEBI:49883"/>
    </cofactor>
    <text evidence="1">Binds 1 [4Fe-4S] cluster per subunit.</text>
</comment>
<comment type="pathway">
    <text>Carbohydrate metabolism; tricarboxylic acid cycle; isocitrate from oxaloacetate: step 2/2.</text>
</comment>
<comment type="subunit">
    <text evidence="1">Monomer.</text>
</comment>
<comment type="subcellular location">
    <subcellularLocation>
        <location>Mitochondrion</location>
    </subcellularLocation>
</comment>
<comment type="similarity">
    <text evidence="3">Belongs to the aconitase/IPM isomerase family.</text>
</comment>
<keyword id="KW-0004">4Fe-4S</keyword>
<keyword id="KW-0903">Direct protein sequencing</keyword>
<keyword id="KW-0408">Iron</keyword>
<keyword id="KW-0411">Iron-sulfur</keyword>
<keyword id="KW-0456">Lyase</keyword>
<keyword id="KW-0479">Metal-binding</keyword>
<keyword id="KW-0496">Mitochondrion</keyword>
<keyword id="KW-1185">Reference proteome</keyword>
<keyword id="KW-0809">Transit peptide</keyword>
<keyword id="KW-0816">Tricarboxylic acid cycle</keyword>
<protein>
    <recommendedName>
        <fullName>Aconitate hydratase, mitochondrial</fullName>
        <shortName>Aconitase</shortName>
        <ecNumber>4.2.1.3</ecNumber>
    </recommendedName>
    <alternativeName>
        <fullName>Citrate hydro-lyase</fullName>
    </alternativeName>
</protein>
<sequence>MLSASRTALRAPRSVRGLATASLTKDSQVNQNLLESHSFINYKKHLENVEIVKSRLNRPLTYAEKLLYGHLDDPHNQEIERGVSYLKLRPDRVACQDATAQMAILQFMSAGIPQVATPSTVHCDHLIQAQVGGPKDLARAIDLNKEVYDFLSTACAKYNLGFWKPGSGIIHQIVLENYAFPGALLIGTDSHTPNAGGLGQLAIGVGGADAVDVMSGLPWELKAPKIIGVKLTGKMSGWTSPKDIILKLAGITTVKGGTGSIVEYFGSGVDTFSCTGMGTICNMGAEIGATTSVFPFNDSMVDYLNATGRSEIAQFAQVYKKDFLSADEGAEYDQVIEIDLNTLEPHINGPFTPDLATPVSKMKETAIANGWPLEVKVGLIGSCTNSSYEDMTRAASIIKDAGAHGLKSKALYTVSPGSEQVRATIARDGQLKTFEDFGGVVMANACGPCIGQWDRQDIKKGDKNTIVSSFNRNFTARNDGNPATHAFVASPEMATVYAISGDLGFNPITDTLVGADGKEFKLKEPQGVGLPPDGYDPGENTYQAPPEDRASVEVVISPTSDRLQKLSPFKPWDGKDAERLPILIKAVGKTTTDHISMAGPWLKYRGHLENISNNYMIGAINAENGKANEVRNHYTGKYDGVPQTAAAYRDAGHKWVVIGDENFGEGSSREHAALEPRFLGGFAIITKSFARIHETNLKKQGLLPLNFKNPADYDKINFDDEVDLIGLTTLAPGKDVILRVHPKEGEAWEAVLTHTFNSEQLEWFKHGSALNFIKSKY</sequence>
<reference key="1">
    <citation type="journal article" date="2004" name="Proc. Natl. Acad. Sci. U.S.A.">
        <title>The diploid genome sequence of Candida albicans.</title>
        <authorList>
            <person name="Jones T."/>
            <person name="Federspiel N.A."/>
            <person name="Chibana H."/>
            <person name="Dungan J."/>
            <person name="Kalman S."/>
            <person name="Magee B.B."/>
            <person name="Newport G."/>
            <person name="Thorstenson Y.R."/>
            <person name="Agabian N."/>
            <person name="Magee P.T."/>
            <person name="Davis R.W."/>
            <person name="Scherer S."/>
        </authorList>
    </citation>
    <scope>NUCLEOTIDE SEQUENCE [LARGE SCALE GENOMIC DNA]</scope>
    <source>
        <strain>SC5314 / ATCC MYA-2876</strain>
    </source>
</reference>
<reference key="2">
    <citation type="journal article" date="2007" name="Genome Biol.">
        <title>Assembly of the Candida albicans genome into sixteen supercontigs aligned on the eight chromosomes.</title>
        <authorList>
            <person name="van het Hoog M."/>
            <person name="Rast T.J."/>
            <person name="Martchenko M."/>
            <person name="Grindle S."/>
            <person name="Dignard D."/>
            <person name="Hogues H."/>
            <person name="Cuomo C."/>
            <person name="Berriman M."/>
            <person name="Scherer S."/>
            <person name="Magee B.B."/>
            <person name="Whiteway M."/>
            <person name="Chibana H."/>
            <person name="Nantel A."/>
            <person name="Magee P.T."/>
        </authorList>
    </citation>
    <scope>GENOME REANNOTATION</scope>
    <source>
        <strain>SC5314 / ATCC MYA-2876</strain>
    </source>
</reference>
<reference key="3">
    <citation type="journal article" date="2013" name="Genome Biol.">
        <title>Assembly of a phased diploid Candida albicans genome facilitates allele-specific measurements and provides a simple model for repeat and indel structure.</title>
        <authorList>
            <person name="Muzzey D."/>
            <person name="Schwartz K."/>
            <person name="Weissman J.S."/>
            <person name="Sherlock G."/>
        </authorList>
    </citation>
    <scope>NUCLEOTIDE SEQUENCE [LARGE SCALE GENOMIC DNA]</scope>
    <scope>GENOME REANNOTATION</scope>
    <source>
        <strain>SC5314 / ATCC MYA-2876</strain>
    </source>
</reference>
<reference key="4">
    <citation type="journal article" date="2000" name="Electrophoresis">
        <title>Cross-species identification of novel Candida albicans immunogenic proteins by combination of two-dimensional polyacrylamide gel electrophoresis and mass spectrometry.</title>
        <authorList>
            <person name="Pardo M."/>
            <person name="Ward M."/>
            <person name="Pitarch A."/>
            <person name="Sanchez M."/>
            <person name="Nombela C."/>
            <person name="Blackstock W."/>
            <person name="Gil C."/>
        </authorList>
    </citation>
    <scope>PROTEIN SEQUENCE OF 377-393 AND 412-422</scope>
    <scope>IDENTIFICATION BY MASS SPECTROMETRY</scope>
    <source>
        <strain>SC5314 / ATCC MYA-2876</strain>
    </source>
</reference>
<gene>
    <name type="primary">ACO1</name>
    <name type="ordered locus">CAALFM_CR08210CA</name>
    <name type="ORF">CaO19.13742</name>
    <name type="ORF">CaO19.6385</name>
</gene>
<organism>
    <name type="scientific">Candida albicans (strain SC5314 / ATCC MYA-2876)</name>
    <name type="common">Yeast</name>
    <dbReference type="NCBI Taxonomy" id="237561"/>
    <lineage>
        <taxon>Eukaryota</taxon>
        <taxon>Fungi</taxon>
        <taxon>Dikarya</taxon>
        <taxon>Ascomycota</taxon>
        <taxon>Saccharomycotina</taxon>
        <taxon>Pichiomycetes</taxon>
        <taxon>Debaryomycetaceae</taxon>
        <taxon>Candida/Lodderomyces clade</taxon>
        <taxon>Candida</taxon>
    </lineage>
</organism>
<name>ACON_CANAL</name>
<proteinExistence type="evidence at protein level"/>
<dbReference type="EC" id="4.2.1.3"/>
<dbReference type="EMBL" id="CP017630">
    <property type="protein sequence ID" value="AOW31505.1"/>
    <property type="molecule type" value="Genomic_DNA"/>
</dbReference>
<dbReference type="RefSeq" id="XP_716225.1">
    <property type="nucleotide sequence ID" value="XM_711132.1"/>
</dbReference>
<dbReference type="SMR" id="P82611"/>
<dbReference type="BioGRID" id="1225184">
    <property type="interactions" value="2"/>
</dbReference>
<dbReference type="FunCoup" id="P82611">
    <property type="interactions" value="957"/>
</dbReference>
<dbReference type="STRING" id="237561.P82611"/>
<dbReference type="EnsemblFungi" id="CR_08210C_A-T">
    <property type="protein sequence ID" value="CR_08210C_A-T-p1"/>
    <property type="gene ID" value="CR_08210C_A"/>
</dbReference>
<dbReference type="GeneID" id="3642090"/>
<dbReference type="KEGG" id="cal:CAALFM_CR08210CA"/>
<dbReference type="CGD" id="CAL0000182282">
    <property type="gene designation" value="ACO1"/>
</dbReference>
<dbReference type="VEuPathDB" id="FungiDB:CR_08210C_A"/>
<dbReference type="eggNOG" id="KOG0453">
    <property type="taxonomic scope" value="Eukaryota"/>
</dbReference>
<dbReference type="HOGENOM" id="CLU_006714_2_2_1"/>
<dbReference type="InParanoid" id="P82611"/>
<dbReference type="OMA" id="KKQGMLG"/>
<dbReference type="OrthoDB" id="2224430at2759"/>
<dbReference type="UniPathway" id="UPA00223">
    <property type="reaction ID" value="UER00718"/>
</dbReference>
<dbReference type="PRO" id="PR:P82611"/>
<dbReference type="Proteomes" id="UP000000559">
    <property type="component" value="Chromosome R"/>
</dbReference>
<dbReference type="GO" id="GO:0005829">
    <property type="term" value="C:cytosol"/>
    <property type="evidence" value="ECO:0000318"/>
    <property type="project" value="GO_Central"/>
</dbReference>
<dbReference type="GO" id="GO:0062040">
    <property type="term" value="C:fungal biofilm matrix"/>
    <property type="evidence" value="ECO:0000314"/>
    <property type="project" value="CGD"/>
</dbReference>
<dbReference type="GO" id="GO:0042645">
    <property type="term" value="C:mitochondrial nucleoid"/>
    <property type="evidence" value="ECO:0007669"/>
    <property type="project" value="EnsemblFungi"/>
</dbReference>
<dbReference type="GO" id="GO:0005739">
    <property type="term" value="C:mitochondrion"/>
    <property type="evidence" value="ECO:0000318"/>
    <property type="project" value="GO_Central"/>
</dbReference>
<dbReference type="GO" id="GO:0051539">
    <property type="term" value="F:4 iron, 4 sulfur cluster binding"/>
    <property type="evidence" value="ECO:0000318"/>
    <property type="project" value="GO_Central"/>
</dbReference>
<dbReference type="GO" id="GO:0003994">
    <property type="term" value="F:aconitate hydratase activity"/>
    <property type="evidence" value="ECO:0000318"/>
    <property type="project" value="GO_Central"/>
</dbReference>
<dbReference type="GO" id="GO:0003690">
    <property type="term" value="F:double-stranded DNA binding"/>
    <property type="evidence" value="ECO:0007669"/>
    <property type="project" value="EnsemblFungi"/>
</dbReference>
<dbReference type="GO" id="GO:0046872">
    <property type="term" value="F:metal ion binding"/>
    <property type="evidence" value="ECO:0007669"/>
    <property type="project" value="UniProtKB-KW"/>
</dbReference>
<dbReference type="GO" id="GO:0003729">
    <property type="term" value="F:mRNA binding"/>
    <property type="evidence" value="ECO:0007669"/>
    <property type="project" value="EnsemblFungi"/>
</dbReference>
<dbReference type="GO" id="GO:0003697">
    <property type="term" value="F:single-stranded DNA binding"/>
    <property type="evidence" value="ECO:0007669"/>
    <property type="project" value="EnsemblFungi"/>
</dbReference>
<dbReference type="GO" id="GO:0000002">
    <property type="term" value="P:mitochondrial genome maintenance"/>
    <property type="evidence" value="ECO:0007669"/>
    <property type="project" value="EnsemblFungi"/>
</dbReference>
<dbReference type="GO" id="GO:0052553">
    <property type="term" value="P:symbiont-mediated perturbation of host immune response"/>
    <property type="evidence" value="ECO:0000314"/>
    <property type="project" value="CGD"/>
</dbReference>
<dbReference type="GO" id="GO:0006099">
    <property type="term" value="P:tricarboxylic acid cycle"/>
    <property type="evidence" value="ECO:0000318"/>
    <property type="project" value="GO_Central"/>
</dbReference>
<dbReference type="CDD" id="cd01584">
    <property type="entry name" value="AcnA_Mitochondrial"/>
    <property type="match status" value="1"/>
</dbReference>
<dbReference type="FunFam" id="3.20.19.10:FF:000002">
    <property type="entry name" value="Aconitate hydratase, mitochondrial"/>
    <property type="match status" value="1"/>
</dbReference>
<dbReference type="FunFam" id="3.30.499.10:FF:000003">
    <property type="entry name" value="Aconitate hydratase, mitochondrial"/>
    <property type="match status" value="1"/>
</dbReference>
<dbReference type="FunFam" id="3.30.499.10:FF:000004">
    <property type="entry name" value="Aconitate hydratase, mitochondrial"/>
    <property type="match status" value="1"/>
</dbReference>
<dbReference type="FunFam" id="3.40.1060.10:FF:000001">
    <property type="entry name" value="Aconitate hydratase, mitochondrial"/>
    <property type="match status" value="1"/>
</dbReference>
<dbReference type="Gene3D" id="3.40.1060.10">
    <property type="entry name" value="Aconitase, Domain 2"/>
    <property type="match status" value="1"/>
</dbReference>
<dbReference type="Gene3D" id="3.30.499.10">
    <property type="entry name" value="Aconitase, domain 3"/>
    <property type="match status" value="2"/>
</dbReference>
<dbReference type="Gene3D" id="3.20.19.10">
    <property type="entry name" value="Aconitase, domain 4"/>
    <property type="match status" value="1"/>
</dbReference>
<dbReference type="InterPro" id="IPR015931">
    <property type="entry name" value="Acnase/IPM_dHydase_lsu_aba_1/3"/>
</dbReference>
<dbReference type="InterPro" id="IPR001030">
    <property type="entry name" value="Acoase/IPM_deHydtase_lsu_aba"/>
</dbReference>
<dbReference type="InterPro" id="IPR015928">
    <property type="entry name" value="Aconitase/3IPM_dehydase_swvl"/>
</dbReference>
<dbReference type="InterPro" id="IPR050926">
    <property type="entry name" value="Aconitase/IPM_isomerase"/>
</dbReference>
<dbReference type="InterPro" id="IPR018136">
    <property type="entry name" value="Aconitase_4Fe-4S_BS"/>
</dbReference>
<dbReference type="InterPro" id="IPR036008">
    <property type="entry name" value="Aconitase_4Fe-4S_dom"/>
</dbReference>
<dbReference type="InterPro" id="IPR015932">
    <property type="entry name" value="Aconitase_dom2"/>
</dbReference>
<dbReference type="InterPro" id="IPR006248">
    <property type="entry name" value="Aconitase_mito-like"/>
</dbReference>
<dbReference type="InterPro" id="IPR000573">
    <property type="entry name" value="AconitaseA/IPMdHydase_ssu_swvl"/>
</dbReference>
<dbReference type="NCBIfam" id="TIGR01340">
    <property type="entry name" value="aconitase_mito"/>
    <property type="match status" value="1"/>
</dbReference>
<dbReference type="NCBIfam" id="NF005558">
    <property type="entry name" value="PRK07229.1"/>
    <property type="match status" value="1"/>
</dbReference>
<dbReference type="PANTHER" id="PTHR43160">
    <property type="entry name" value="ACONITATE HYDRATASE B"/>
    <property type="match status" value="1"/>
</dbReference>
<dbReference type="PANTHER" id="PTHR43160:SF3">
    <property type="entry name" value="ACONITATE HYDRATASE, MITOCHONDRIAL"/>
    <property type="match status" value="1"/>
</dbReference>
<dbReference type="Pfam" id="PF00330">
    <property type="entry name" value="Aconitase"/>
    <property type="match status" value="1"/>
</dbReference>
<dbReference type="Pfam" id="PF00694">
    <property type="entry name" value="Aconitase_C"/>
    <property type="match status" value="1"/>
</dbReference>
<dbReference type="PRINTS" id="PR00415">
    <property type="entry name" value="ACONITASE"/>
</dbReference>
<dbReference type="SUPFAM" id="SSF53732">
    <property type="entry name" value="Aconitase iron-sulfur domain"/>
    <property type="match status" value="1"/>
</dbReference>
<dbReference type="SUPFAM" id="SSF52016">
    <property type="entry name" value="LeuD/IlvD-like"/>
    <property type="match status" value="1"/>
</dbReference>
<dbReference type="PROSITE" id="PS00450">
    <property type="entry name" value="ACONITASE_1"/>
    <property type="match status" value="1"/>
</dbReference>
<dbReference type="PROSITE" id="PS01244">
    <property type="entry name" value="ACONITASE_2"/>
    <property type="match status" value="1"/>
</dbReference>
<feature type="transit peptide" description="Mitochondrion" evidence="2">
    <location>
        <begin position="1"/>
        <end status="unknown"/>
    </location>
</feature>
<feature type="chain" id="PRO_0000076648" description="Aconitate hydratase, mitochondrial">
    <location>
        <begin status="unknown"/>
        <end position="777"/>
    </location>
</feature>
<feature type="binding site" evidence="1">
    <location>
        <position position="96"/>
    </location>
    <ligand>
        <name>substrate</name>
    </ligand>
</feature>
<feature type="binding site" evidence="1">
    <location>
        <begin position="189"/>
        <end position="191"/>
    </location>
    <ligand>
        <name>substrate</name>
    </ligand>
</feature>
<feature type="binding site" evidence="1">
    <location>
        <position position="383"/>
    </location>
    <ligand>
        <name>[4Fe-4S] cluster</name>
        <dbReference type="ChEBI" id="CHEBI:49883"/>
    </ligand>
</feature>
<feature type="binding site" evidence="1">
    <location>
        <position position="446"/>
    </location>
    <ligand>
        <name>[4Fe-4S] cluster</name>
        <dbReference type="ChEBI" id="CHEBI:49883"/>
    </ligand>
</feature>
<feature type="binding site" evidence="1">
    <location>
        <position position="449"/>
    </location>
    <ligand>
        <name>[4Fe-4S] cluster</name>
        <dbReference type="ChEBI" id="CHEBI:49883"/>
    </ligand>
</feature>
<feature type="binding site" evidence="1">
    <location>
        <position position="472"/>
    </location>
    <ligand>
        <name>substrate</name>
    </ligand>
</feature>
<feature type="binding site" evidence="1">
    <location>
        <position position="477"/>
    </location>
    <ligand>
        <name>substrate</name>
    </ligand>
</feature>
<feature type="binding site" evidence="1">
    <location>
        <position position="605"/>
    </location>
    <ligand>
        <name>substrate</name>
    </ligand>
</feature>
<feature type="binding site" evidence="1">
    <location>
        <begin position="668"/>
        <end position="669"/>
    </location>
    <ligand>
        <name>substrate</name>
    </ligand>
</feature>
<feature type="sequence conflict" description="In Ref. 4; AA sequence." evidence="3" ref="4">
    <original>EQV</original>
    <variation>VQQ</variation>
    <location>
        <begin position="419"/>
        <end position="421"/>
    </location>
</feature>
<accession>P82611</accession>
<accession>A0A1D8PTN8</accession>
<accession>Q5A380</accession>
<evidence type="ECO:0000250" key="1"/>
<evidence type="ECO:0000255" key="2"/>
<evidence type="ECO:0000305" key="3"/>